<gene>
    <name evidence="1" type="primary">rplV</name>
    <name type="ordered locus">MAV_4466</name>
</gene>
<comment type="function">
    <text evidence="1">This protein binds specifically to 23S rRNA; its binding is stimulated by other ribosomal proteins, e.g. L4, L17, and L20. It is important during the early stages of 50S assembly. It makes multiple contacts with different domains of the 23S rRNA in the assembled 50S subunit and ribosome (By similarity).</text>
</comment>
<comment type="function">
    <text evidence="1">The globular domain of the protein is located near the polypeptide exit tunnel on the outside of the subunit, while an extended beta-hairpin is found that lines the wall of the exit tunnel in the center of the 70S ribosome.</text>
</comment>
<comment type="subunit">
    <text evidence="1">Part of the 50S ribosomal subunit.</text>
</comment>
<comment type="similarity">
    <text evidence="1">Belongs to the universal ribosomal protein uL22 family.</text>
</comment>
<sequence length="180" mass="19073">MTTTEFPSAVAKARFVRVSPRKARRVIDLVRGRSVTDALDILRWAPQAASEPVAKVIASAAANAQNNNGLDPATLVVATVYADEGPTAKRIRPRAQGRAFRIRKRTSHITVVVESRPAKDQRSAKSSRTRRAEASKAAAKAPAKKAPAKKAPAKKAPAKTAAKKTPAKTSETSDAKGGSD</sequence>
<protein>
    <recommendedName>
        <fullName evidence="1">Large ribosomal subunit protein uL22</fullName>
    </recommendedName>
    <alternativeName>
        <fullName evidence="3">50S ribosomal protein L22</fullName>
    </alternativeName>
</protein>
<evidence type="ECO:0000255" key="1">
    <source>
        <dbReference type="HAMAP-Rule" id="MF_01331"/>
    </source>
</evidence>
<evidence type="ECO:0000256" key="2">
    <source>
        <dbReference type="SAM" id="MobiDB-lite"/>
    </source>
</evidence>
<evidence type="ECO:0000305" key="3"/>
<name>RL22_MYCA1</name>
<keyword id="KW-0687">Ribonucleoprotein</keyword>
<keyword id="KW-0689">Ribosomal protein</keyword>
<keyword id="KW-0694">RNA-binding</keyword>
<keyword id="KW-0699">rRNA-binding</keyword>
<dbReference type="EMBL" id="CP000479">
    <property type="protein sequence ID" value="ABK69438.1"/>
    <property type="molecule type" value="Genomic_DNA"/>
</dbReference>
<dbReference type="RefSeq" id="WP_009979094.1">
    <property type="nucleotide sequence ID" value="NC_008595.1"/>
</dbReference>
<dbReference type="SMR" id="A0QL13"/>
<dbReference type="GeneID" id="75271980"/>
<dbReference type="KEGG" id="mav:MAV_4466"/>
<dbReference type="HOGENOM" id="CLU_083987_1_0_11"/>
<dbReference type="Proteomes" id="UP000001574">
    <property type="component" value="Chromosome"/>
</dbReference>
<dbReference type="GO" id="GO:0022625">
    <property type="term" value="C:cytosolic large ribosomal subunit"/>
    <property type="evidence" value="ECO:0007669"/>
    <property type="project" value="TreeGrafter"/>
</dbReference>
<dbReference type="GO" id="GO:0019843">
    <property type="term" value="F:rRNA binding"/>
    <property type="evidence" value="ECO:0007669"/>
    <property type="project" value="UniProtKB-UniRule"/>
</dbReference>
<dbReference type="GO" id="GO:0003735">
    <property type="term" value="F:structural constituent of ribosome"/>
    <property type="evidence" value="ECO:0007669"/>
    <property type="project" value="InterPro"/>
</dbReference>
<dbReference type="GO" id="GO:0006412">
    <property type="term" value="P:translation"/>
    <property type="evidence" value="ECO:0007669"/>
    <property type="project" value="UniProtKB-UniRule"/>
</dbReference>
<dbReference type="CDD" id="cd00336">
    <property type="entry name" value="Ribosomal_L22"/>
    <property type="match status" value="1"/>
</dbReference>
<dbReference type="FunFam" id="3.90.470.10:FF:000002">
    <property type="entry name" value="50S ribosomal protein L22"/>
    <property type="match status" value="1"/>
</dbReference>
<dbReference type="Gene3D" id="3.90.470.10">
    <property type="entry name" value="Ribosomal protein L22/L17"/>
    <property type="match status" value="1"/>
</dbReference>
<dbReference type="HAMAP" id="MF_01331_B">
    <property type="entry name" value="Ribosomal_uL22_B"/>
    <property type="match status" value="1"/>
</dbReference>
<dbReference type="InterPro" id="IPR001063">
    <property type="entry name" value="Ribosomal_uL22"/>
</dbReference>
<dbReference type="InterPro" id="IPR005727">
    <property type="entry name" value="Ribosomal_uL22_bac/chlpt-type"/>
</dbReference>
<dbReference type="InterPro" id="IPR047867">
    <property type="entry name" value="Ribosomal_uL22_bac/org-type"/>
</dbReference>
<dbReference type="InterPro" id="IPR018260">
    <property type="entry name" value="Ribosomal_uL22_CS"/>
</dbReference>
<dbReference type="InterPro" id="IPR036394">
    <property type="entry name" value="Ribosomal_uL22_sf"/>
</dbReference>
<dbReference type="NCBIfam" id="TIGR01044">
    <property type="entry name" value="rplV_bact"/>
    <property type="match status" value="1"/>
</dbReference>
<dbReference type="PANTHER" id="PTHR13501">
    <property type="entry name" value="CHLOROPLAST 50S RIBOSOMAL PROTEIN L22-RELATED"/>
    <property type="match status" value="1"/>
</dbReference>
<dbReference type="PANTHER" id="PTHR13501:SF8">
    <property type="entry name" value="LARGE RIBOSOMAL SUBUNIT PROTEIN UL22M"/>
    <property type="match status" value="1"/>
</dbReference>
<dbReference type="Pfam" id="PF00237">
    <property type="entry name" value="Ribosomal_L22"/>
    <property type="match status" value="1"/>
</dbReference>
<dbReference type="SUPFAM" id="SSF54843">
    <property type="entry name" value="Ribosomal protein L22"/>
    <property type="match status" value="1"/>
</dbReference>
<dbReference type="PROSITE" id="PS00464">
    <property type="entry name" value="RIBOSOMAL_L22"/>
    <property type="match status" value="1"/>
</dbReference>
<proteinExistence type="inferred from homology"/>
<reference key="1">
    <citation type="submission" date="2006-10" db="EMBL/GenBank/DDBJ databases">
        <authorList>
            <person name="Fleischmann R.D."/>
            <person name="Dodson R.J."/>
            <person name="Haft D.H."/>
            <person name="Merkel J.S."/>
            <person name="Nelson W.C."/>
            <person name="Fraser C.M."/>
        </authorList>
    </citation>
    <scope>NUCLEOTIDE SEQUENCE [LARGE SCALE GENOMIC DNA]</scope>
    <source>
        <strain>104</strain>
    </source>
</reference>
<accession>A0QL13</accession>
<feature type="chain" id="PRO_1000052611" description="Large ribosomal subunit protein uL22">
    <location>
        <begin position="1"/>
        <end position="180"/>
    </location>
</feature>
<feature type="region of interest" description="Disordered" evidence="2">
    <location>
        <begin position="111"/>
        <end position="180"/>
    </location>
</feature>
<feature type="compositionally biased region" description="Basic residues" evidence="2">
    <location>
        <begin position="142"/>
        <end position="166"/>
    </location>
</feature>
<feature type="compositionally biased region" description="Basic and acidic residues" evidence="2">
    <location>
        <begin position="171"/>
        <end position="180"/>
    </location>
</feature>
<organism>
    <name type="scientific">Mycobacterium avium (strain 104)</name>
    <dbReference type="NCBI Taxonomy" id="243243"/>
    <lineage>
        <taxon>Bacteria</taxon>
        <taxon>Bacillati</taxon>
        <taxon>Actinomycetota</taxon>
        <taxon>Actinomycetes</taxon>
        <taxon>Mycobacteriales</taxon>
        <taxon>Mycobacteriaceae</taxon>
        <taxon>Mycobacterium</taxon>
        <taxon>Mycobacterium avium complex (MAC)</taxon>
    </lineage>
</organism>